<keyword id="KW-0067">ATP-binding</keyword>
<keyword id="KW-0997">Cell inner membrane</keyword>
<keyword id="KW-1003">Cell membrane</keyword>
<keyword id="KW-0472">Membrane</keyword>
<keyword id="KW-0547">Nucleotide-binding</keyword>
<keyword id="KW-0677">Repeat</keyword>
<keyword id="KW-0762">Sugar transport</keyword>
<keyword id="KW-1278">Translocase</keyword>
<keyword id="KW-0813">Transport</keyword>
<gene>
    <name type="ordered locus">PSPPH_3184</name>
</gene>
<feature type="chain" id="PRO_0000262982" description="Putative ribose/galactose/methyl galactoside import ATP-binding protein">
    <location>
        <begin position="1"/>
        <end position="525"/>
    </location>
</feature>
<feature type="domain" description="ABC transporter 1" evidence="1">
    <location>
        <begin position="33"/>
        <end position="269"/>
    </location>
</feature>
<feature type="domain" description="ABC transporter 2" evidence="1">
    <location>
        <begin position="279"/>
        <end position="523"/>
    </location>
</feature>
<feature type="region of interest" description="Disordered" evidence="2">
    <location>
        <begin position="1"/>
        <end position="30"/>
    </location>
</feature>
<feature type="compositionally biased region" description="Low complexity" evidence="2">
    <location>
        <begin position="14"/>
        <end position="25"/>
    </location>
</feature>
<feature type="binding site" evidence="1">
    <location>
        <begin position="65"/>
        <end position="72"/>
    </location>
    <ligand>
        <name>ATP</name>
        <dbReference type="ChEBI" id="CHEBI:30616"/>
    </ligand>
</feature>
<proteinExistence type="inferred from homology"/>
<comment type="function">
    <text evidence="1">Part of an ABC transporter complex involved in carbohydrate import. Could be involved in ribose, galactose and/or methyl galactoside import. Responsible for energy coupling to the transport system.</text>
</comment>
<comment type="catalytic activity">
    <reaction evidence="1">
        <text>D-ribose(out) + ATP + H2O = D-ribose(in) + ADP + phosphate + H(+)</text>
        <dbReference type="Rhea" id="RHEA:29903"/>
        <dbReference type="ChEBI" id="CHEBI:15377"/>
        <dbReference type="ChEBI" id="CHEBI:15378"/>
        <dbReference type="ChEBI" id="CHEBI:30616"/>
        <dbReference type="ChEBI" id="CHEBI:43474"/>
        <dbReference type="ChEBI" id="CHEBI:47013"/>
        <dbReference type="ChEBI" id="CHEBI:456216"/>
        <dbReference type="EC" id="7.5.2.7"/>
    </reaction>
</comment>
<comment type="catalytic activity">
    <reaction evidence="1">
        <text>D-galactose(out) + ATP + H2O = D-galactose(in) + ADP + phosphate + H(+)</text>
        <dbReference type="Rhea" id="RHEA:60156"/>
        <dbReference type="ChEBI" id="CHEBI:4139"/>
        <dbReference type="ChEBI" id="CHEBI:15377"/>
        <dbReference type="ChEBI" id="CHEBI:15378"/>
        <dbReference type="ChEBI" id="CHEBI:30616"/>
        <dbReference type="ChEBI" id="CHEBI:43474"/>
        <dbReference type="ChEBI" id="CHEBI:456216"/>
        <dbReference type="EC" id="7.5.2.11"/>
    </reaction>
</comment>
<comment type="subcellular location">
    <subcellularLocation>
        <location evidence="1">Cell inner membrane</location>
        <topology evidence="1">Peripheral membrane protein</topology>
    </subcellularLocation>
</comment>
<comment type="similarity">
    <text evidence="1">Belongs to the ABC transporter superfamily. Carbohydrate importer 2 (CUT2) (TC 3.A.1.2) family.</text>
</comment>
<name>RGMG_PSE14</name>
<sequence>MFGSATANPPAQRDLPSSDSDSPTPDAQPPYLLEISHISKGFPGVIALNDVQLRVRPGSVLALMGENGAGKSTLMKIIAGIYQPDSGEIRLRGKPIRFETPLSALQAGIAMIHQELNLMPFMSIAENIWIGREQLNGLHMVDHREMHRCTTELLERLRIRLDPEDLVGNLSIAERQMVEIAKAVSYNSDVLIMDEPTSAITETEVAHLFSIINDLRAQGKGIIYITHKMNEVFEIADEVAVFRDGAYIGLQRAESMDGDSLITMMVGRELTQLFPEREKPPGEVLLSVSNLCLNGIFKDVSFDLRAGEILGIAGLMGSGRTNVAETLFGITPSDSGEVRFDGTTVHIADPHQAIELGFALLTEDRKLTGLFPCLSVMENMEMAVLANYAGNGFVQQKALRALCEDMCKKLRVKTPSLEQCIDTLSGGNQQKALLARWLMTNPRLLILDEPTRGIDVGAKAEIYRLISLLASEGMAVIMISSELPEVLGMSDRVMVMHEGEMMGILDRGEATQEKVMHLASGHKVH</sequence>
<organism>
    <name type="scientific">Pseudomonas savastanoi pv. phaseolicola (strain 1448A / Race 6)</name>
    <name type="common">Pseudomonas syringae pv. phaseolicola (strain 1448A / Race 6)</name>
    <dbReference type="NCBI Taxonomy" id="264730"/>
    <lineage>
        <taxon>Bacteria</taxon>
        <taxon>Pseudomonadati</taxon>
        <taxon>Pseudomonadota</taxon>
        <taxon>Gammaproteobacteria</taxon>
        <taxon>Pseudomonadales</taxon>
        <taxon>Pseudomonadaceae</taxon>
        <taxon>Pseudomonas</taxon>
    </lineage>
</organism>
<evidence type="ECO:0000255" key="1">
    <source>
        <dbReference type="HAMAP-Rule" id="MF_01717"/>
    </source>
</evidence>
<evidence type="ECO:0000256" key="2">
    <source>
        <dbReference type="SAM" id="MobiDB-lite"/>
    </source>
</evidence>
<accession>Q48GY7</accession>
<dbReference type="EC" id="7.5.2.11" evidence="1"/>
<dbReference type="EC" id="7.5.2.7" evidence="1"/>
<dbReference type="EMBL" id="CP000058">
    <property type="protein sequence ID" value="AAZ34181.1"/>
    <property type="molecule type" value="Genomic_DNA"/>
</dbReference>
<dbReference type="RefSeq" id="WP_011168997.1">
    <property type="nucleotide sequence ID" value="NC_005773.3"/>
</dbReference>
<dbReference type="SMR" id="Q48GY7"/>
<dbReference type="KEGG" id="psp:PSPPH_3184"/>
<dbReference type="eggNOG" id="COG1129">
    <property type="taxonomic scope" value="Bacteria"/>
</dbReference>
<dbReference type="HOGENOM" id="CLU_000604_92_0_6"/>
<dbReference type="Proteomes" id="UP000000551">
    <property type="component" value="Chromosome"/>
</dbReference>
<dbReference type="GO" id="GO:0005886">
    <property type="term" value="C:plasma membrane"/>
    <property type="evidence" value="ECO:0007669"/>
    <property type="project" value="UniProtKB-SubCell"/>
</dbReference>
<dbReference type="GO" id="GO:0015611">
    <property type="term" value="F:ABC-type D-ribose transporter activity"/>
    <property type="evidence" value="ECO:0007669"/>
    <property type="project" value="UniProtKB-EC"/>
</dbReference>
<dbReference type="GO" id="GO:0005524">
    <property type="term" value="F:ATP binding"/>
    <property type="evidence" value="ECO:0007669"/>
    <property type="project" value="UniProtKB-KW"/>
</dbReference>
<dbReference type="GO" id="GO:0016887">
    <property type="term" value="F:ATP hydrolysis activity"/>
    <property type="evidence" value="ECO:0007669"/>
    <property type="project" value="InterPro"/>
</dbReference>
<dbReference type="CDD" id="cd03216">
    <property type="entry name" value="ABC_Carb_Monos_I"/>
    <property type="match status" value="1"/>
</dbReference>
<dbReference type="CDD" id="cd03215">
    <property type="entry name" value="ABC_Carb_Monos_II"/>
    <property type="match status" value="1"/>
</dbReference>
<dbReference type="FunFam" id="3.40.50.300:FF:000126">
    <property type="entry name" value="Galactose/methyl galactoside import ATP-binding protein MglA"/>
    <property type="match status" value="1"/>
</dbReference>
<dbReference type="FunFam" id="3.40.50.300:FF:000127">
    <property type="entry name" value="Ribose import ATP-binding protein RbsA"/>
    <property type="match status" value="1"/>
</dbReference>
<dbReference type="Gene3D" id="3.40.50.300">
    <property type="entry name" value="P-loop containing nucleotide triphosphate hydrolases"/>
    <property type="match status" value="2"/>
</dbReference>
<dbReference type="InterPro" id="IPR003593">
    <property type="entry name" value="AAA+_ATPase"/>
</dbReference>
<dbReference type="InterPro" id="IPR050107">
    <property type="entry name" value="ABC_carbohydrate_import_ATPase"/>
</dbReference>
<dbReference type="InterPro" id="IPR003439">
    <property type="entry name" value="ABC_transporter-like_ATP-bd"/>
</dbReference>
<dbReference type="InterPro" id="IPR017871">
    <property type="entry name" value="ABC_transporter-like_CS"/>
</dbReference>
<dbReference type="InterPro" id="IPR027417">
    <property type="entry name" value="P-loop_NTPase"/>
</dbReference>
<dbReference type="PANTHER" id="PTHR43790">
    <property type="entry name" value="CARBOHYDRATE TRANSPORT ATP-BINDING PROTEIN MG119-RELATED"/>
    <property type="match status" value="1"/>
</dbReference>
<dbReference type="PANTHER" id="PTHR43790:SF7">
    <property type="entry name" value="GALACTOSE_METHYL GALACTOSIDE IMPORT ATP-BINDING PROTEIN MGLA"/>
    <property type="match status" value="1"/>
</dbReference>
<dbReference type="Pfam" id="PF00005">
    <property type="entry name" value="ABC_tran"/>
    <property type="match status" value="2"/>
</dbReference>
<dbReference type="SMART" id="SM00382">
    <property type="entry name" value="AAA"/>
    <property type="match status" value="2"/>
</dbReference>
<dbReference type="SUPFAM" id="SSF52540">
    <property type="entry name" value="P-loop containing nucleoside triphosphate hydrolases"/>
    <property type="match status" value="2"/>
</dbReference>
<dbReference type="PROSITE" id="PS00211">
    <property type="entry name" value="ABC_TRANSPORTER_1"/>
    <property type="match status" value="1"/>
</dbReference>
<dbReference type="PROSITE" id="PS50893">
    <property type="entry name" value="ABC_TRANSPORTER_2"/>
    <property type="match status" value="2"/>
</dbReference>
<dbReference type="PROSITE" id="PS51260">
    <property type="entry name" value="MGLA"/>
    <property type="match status" value="1"/>
</dbReference>
<dbReference type="PROSITE" id="PS51254">
    <property type="entry name" value="RBSA"/>
    <property type="match status" value="1"/>
</dbReference>
<reference key="1">
    <citation type="journal article" date="2005" name="J. Bacteriol.">
        <title>Whole-genome sequence analysis of Pseudomonas syringae pv. phaseolicola 1448A reveals divergence among pathovars in genes involved in virulence and transposition.</title>
        <authorList>
            <person name="Joardar V."/>
            <person name="Lindeberg M."/>
            <person name="Jackson R.W."/>
            <person name="Selengut J."/>
            <person name="Dodson R."/>
            <person name="Brinkac L.M."/>
            <person name="Daugherty S.C."/>
            <person name="DeBoy R.T."/>
            <person name="Durkin A.S."/>
            <person name="Gwinn Giglio M."/>
            <person name="Madupu R."/>
            <person name="Nelson W.C."/>
            <person name="Rosovitz M.J."/>
            <person name="Sullivan S.A."/>
            <person name="Crabtree J."/>
            <person name="Creasy T."/>
            <person name="Davidsen T.M."/>
            <person name="Haft D.H."/>
            <person name="Zafar N."/>
            <person name="Zhou L."/>
            <person name="Halpin R."/>
            <person name="Holley T."/>
            <person name="Khouri H.M."/>
            <person name="Feldblyum T.V."/>
            <person name="White O."/>
            <person name="Fraser C.M."/>
            <person name="Chatterjee A.K."/>
            <person name="Cartinhour S."/>
            <person name="Schneider D."/>
            <person name="Mansfield J.W."/>
            <person name="Collmer A."/>
            <person name="Buell R."/>
        </authorList>
    </citation>
    <scope>NUCLEOTIDE SEQUENCE [LARGE SCALE GENOMIC DNA]</scope>
    <source>
        <strain>1448A / Race 6</strain>
    </source>
</reference>
<protein>
    <recommendedName>
        <fullName evidence="1">Putative ribose/galactose/methyl galactoside import ATP-binding protein</fullName>
        <ecNumber evidence="1">7.5.2.11</ecNumber>
        <ecNumber evidence="1">7.5.2.7</ecNumber>
    </recommendedName>
</protein>